<dbReference type="EC" id="1.2.1.12" evidence="1"/>
<dbReference type="EMBL" id="M63370">
    <property type="protein sequence ID" value="AAA23094.1"/>
    <property type="molecule type" value="Genomic_DNA"/>
</dbReference>
<dbReference type="PIR" id="I40701">
    <property type="entry name" value="I40701"/>
</dbReference>
<dbReference type="SMR" id="P24748"/>
<dbReference type="STRING" id="1333848.CFNIH1_16055"/>
<dbReference type="UniPathway" id="UPA00109">
    <property type="reaction ID" value="UER00184"/>
</dbReference>
<dbReference type="GO" id="GO:0005737">
    <property type="term" value="C:cytoplasm"/>
    <property type="evidence" value="ECO:0007669"/>
    <property type="project" value="UniProtKB-SubCell"/>
</dbReference>
<dbReference type="GO" id="GO:0004365">
    <property type="term" value="F:glyceraldehyde-3-phosphate dehydrogenase (NAD+) (phosphorylating) activity"/>
    <property type="evidence" value="ECO:0000250"/>
    <property type="project" value="UniProtKB"/>
</dbReference>
<dbReference type="GO" id="GO:0051287">
    <property type="term" value="F:NAD binding"/>
    <property type="evidence" value="ECO:0000250"/>
    <property type="project" value="UniProtKB"/>
</dbReference>
<dbReference type="GO" id="GO:0050661">
    <property type="term" value="F:NADP binding"/>
    <property type="evidence" value="ECO:0007669"/>
    <property type="project" value="InterPro"/>
</dbReference>
<dbReference type="GO" id="GO:0006006">
    <property type="term" value="P:glucose metabolic process"/>
    <property type="evidence" value="ECO:0007669"/>
    <property type="project" value="InterPro"/>
</dbReference>
<dbReference type="GO" id="GO:0006096">
    <property type="term" value="P:glycolytic process"/>
    <property type="evidence" value="ECO:0007669"/>
    <property type="project" value="UniProtKB-UniPathway"/>
</dbReference>
<dbReference type="CDD" id="cd18126">
    <property type="entry name" value="GAPDH_I_C"/>
    <property type="match status" value="1"/>
</dbReference>
<dbReference type="CDD" id="cd05214">
    <property type="entry name" value="GAPDH_I_N"/>
    <property type="match status" value="1"/>
</dbReference>
<dbReference type="FunFam" id="3.30.360.10:FF:000001">
    <property type="entry name" value="Glyceraldehyde-3-phosphate dehydrogenase"/>
    <property type="match status" value="1"/>
</dbReference>
<dbReference type="FunFam" id="3.40.50.720:FF:000001">
    <property type="entry name" value="Glyceraldehyde-3-phosphate dehydrogenase"/>
    <property type="match status" value="1"/>
</dbReference>
<dbReference type="Gene3D" id="3.30.360.10">
    <property type="entry name" value="Dihydrodipicolinate Reductase, domain 2"/>
    <property type="match status" value="1"/>
</dbReference>
<dbReference type="Gene3D" id="3.40.50.720">
    <property type="entry name" value="NAD(P)-binding Rossmann-like Domain"/>
    <property type="match status" value="1"/>
</dbReference>
<dbReference type="InterPro" id="IPR020831">
    <property type="entry name" value="GlycerAld/Erythrose_P_DH"/>
</dbReference>
<dbReference type="InterPro" id="IPR020830">
    <property type="entry name" value="GlycerAld_3-P_DH_AS"/>
</dbReference>
<dbReference type="InterPro" id="IPR020829">
    <property type="entry name" value="GlycerAld_3-P_DH_cat"/>
</dbReference>
<dbReference type="InterPro" id="IPR020828">
    <property type="entry name" value="GlycerAld_3-P_DH_NAD(P)-bd"/>
</dbReference>
<dbReference type="InterPro" id="IPR006424">
    <property type="entry name" value="Glyceraldehyde-3-P_DH_1"/>
</dbReference>
<dbReference type="InterPro" id="IPR036291">
    <property type="entry name" value="NAD(P)-bd_dom_sf"/>
</dbReference>
<dbReference type="NCBIfam" id="TIGR01534">
    <property type="entry name" value="GAPDH-I"/>
    <property type="match status" value="1"/>
</dbReference>
<dbReference type="NCBIfam" id="NF011954">
    <property type="entry name" value="PRK15425.1"/>
    <property type="match status" value="1"/>
</dbReference>
<dbReference type="PANTHER" id="PTHR10836">
    <property type="entry name" value="GLYCERALDEHYDE 3-PHOSPHATE DEHYDROGENASE"/>
    <property type="match status" value="1"/>
</dbReference>
<dbReference type="PANTHER" id="PTHR10836:SF76">
    <property type="entry name" value="GLYCERALDEHYDE-3-PHOSPHATE DEHYDROGENASE-RELATED"/>
    <property type="match status" value="1"/>
</dbReference>
<dbReference type="Pfam" id="PF02800">
    <property type="entry name" value="Gp_dh_C"/>
    <property type="match status" value="1"/>
</dbReference>
<dbReference type="Pfam" id="PF00044">
    <property type="entry name" value="Gp_dh_N"/>
    <property type="match status" value="1"/>
</dbReference>
<dbReference type="PIRSF" id="PIRSF000149">
    <property type="entry name" value="GAP_DH"/>
    <property type="match status" value="1"/>
</dbReference>
<dbReference type="PRINTS" id="PR00078">
    <property type="entry name" value="G3PDHDRGNASE"/>
</dbReference>
<dbReference type="SMART" id="SM00846">
    <property type="entry name" value="Gp_dh_N"/>
    <property type="match status" value="1"/>
</dbReference>
<dbReference type="SUPFAM" id="SSF55347">
    <property type="entry name" value="Glyceraldehyde-3-phosphate dehydrogenase-like, C-terminal domain"/>
    <property type="match status" value="1"/>
</dbReference>
<dbReference type="SUPFAM" id="SSF51735">
    <property type="entry name" value="NAD(P)-binding Rossmann-fold domains"/>
    <property type="match status" value="1"/>
</dbReference>
<dbReference type="PROSITE" id="PS00071">
    <property type="entry name" value="GAPDH"/>
    <property type="match status" value="1"/>
</dbReference>
<reference key="1">
    <citation type="journal article" date="1991" name="J. Gen. Microbiol.">
        <title>Molecular and evolutionary relationships among enteric bacteria.</title>
        <authorList>
            <person name="Lawrence J.G."/>
            <person name="Ochman H."/>
            <person name="Hartl D.L."/>
        </authorList>
    </citation>
    <scope>NUCLEOTIDE SEQUENCE [GENOMIC DNA]</scope>
    <source>
        <strain>OS60</strain>
    </source>
</reference>
<gene>
    <name type="primary">gap</name>
</gene>
<comment type="function">
    <text evidence="1">Catalyzes the oxidative phosphorylation of glyceraldehyde 3-phosphate (G3P) to 1,3-bisphosphoglycerate (BPG) using the cofactor NAD. The first reaction step involves the formation of a hemiacetal intermediate between G3P and a cysteine residue, and this hemiacetal intermediate is then oxidized to a thioester, with concomitant reduction of NAD to NADH. The reduced NADH is then exchanged with the second NAD, and the thioester is attacked by a nucleophilic inorganic phosphate to produce BPG.</text>
</comment>
<comment type="catalytic activity">
    <reaction evidence="1">
        <text>D-glyceraldehyde 3-phosphate + phosphate + NAD(+) = (2R)-3-phospho-glyceroyl phosphate + NADH + H(+)</text>
        <dbReference type="Rhea" id="RHEA:10300"/>
        <dbReference type="ChEBI" id="CHEBI:15378"/>
        <dbReference type="ChEBI" id="CHEBI:43474"/>
        <dbReference type="ChEBI" id="CHEBI:57540"/>
        <dbReference type="ChEBI" id="CHEBI:57604"/>
        <dbReference type="ChEBI" id="CHEBI:57945"/>
        <dbReference type="ChEBI" id="CHEBI:59776"/>
        <dbReference type="EC" id="1.2.1.12"/>
    </reaction>
</comment>
<comment type="pathway">
    <text evidence="3">Carbohydrate degradation; glycolysis; pyruvate from D-glyceraldehyde 3-phosphate: step 1/5.</text>
</comment>
<comment type="subunit">
    <text evidence="1">Homotetramer.</text>
</comment>
<comment type="subcellular location">
    <subcellularLocation>
        <location evidence="3">Cytoplasm</location>
    </subcellularLocation>
</comment>
<comment type="similarity">
    <text evidence="3">Belongs to the glyceraldehyde-3-phosphate dehydrogenase family.</text>
</comment>
<sequence length="294" mass="31478">IVFRAAQERSDIEIVAINDLLDADYMAYMLKYDSTHGRFNGTVEVKDGHLIVNGKKIRVTAERDPANLKWDEVGVDVVAEATGLFLTDETARKHITAGAKKVVLTGPSKDNTPMFVKGANFDKYEGQDIVSNASCTTNCLAPLAKVINDNFGIIEGLMTTVHATTATQKTVDGPSHKDWRGGRGASQNIIPSSTGAAKAVGKVLPELNGKLTGMAFRVPTPNVSVVDLTVRLEKAASYEEIKKAIKAASEGPMKGVLGYTEDDVVSTDFNGEVCTSVFDAKAGIALNDNFVKLV</sequence>
<evidence type="ECO:0000250" key="1">
    <source>
        <dbReference type="UniProtKB" id="P0A9B2"/>
    </source>
</evidence>
<evidence type="ECO:0000256" key="2">
    <source>
        <dbReference type="SAM" id="MobiDB-lite"/>
    </source>
</evidence>
<evidence type="ECO:0000305" key="3"/>
<proteinExistence type="inferred from homology"/>
<protein>
    <recommendedName>
        <fullName evidence="1">Glyceraldehyde-3-phosphate dehydrogenase</fullName>
        <shortName evidence="1">GAPDH</shortName>
        <ecNumber evidence="1">1.2.1.12</ecNumber>
    </recommendedName>
    <alternativeName>
        <fullName evidence="1">NAD-dependent glyceraldehyde-3-phosphate dehydrogenase</fullName>
    </alternativeName>
</protein>
<name>G3P_CITFR</name>
<feature type="chain" id="PRO_0000145644" description="Glyceraldehyde-3-phosphate dehydrogenase">
    <location>
        <begin position="1" status="less than"/>
        <end position="294" status="greater than"/>
    </location>
</feature>
<feature type="region of interest" description="Disordered" evidence="2">
    <location>
        <begin position="169"/>
        <end position="188"/>
    </location>
</feature>
<feature type="active site" description="Nucleophile" evidence="1">
    <location>
        <position position="135"/>
    </location>
</feature>
<feature type="binding site" evidence="1">
    <location>
        <position position="19"/>
    </location>
    <ligand>
        <name>NAD(+)</name>
        <dbReference type="ChEBI" id="CHEBI:57540"/>
    </ligand>
</feature>
<feature type="binding site" evidence="1">
    <location>
        <position position="63"/>
    </location>
    <ligand>
        <name>NAD(+)</name>
        <dbReference type="ChEBI" id="CHEBI:57540"/>
    </ligand>
</feature>
<feature type="binding site" evidence="1">
    <location>
        <position position="105"/>
    </location>
    <ligand>
        <name>NAD(+)</name>
        <dbReference type="ChEBI" id="CHEBI:57540"/>
    </ligand>
</feature>
<feature type="binding site" evidence="1">
    <location>
        <begin position="134"/>
        <end position="136"/>
    </location>
    <ligand>
        <name>D-glyceraldehyde 3-phosphate</name>
        <dbReference type="ChEBI" id="CHEBI:59776"/>
    </ligand>
</feature>
<feature type="binding site" evidence="1">
    <location>
        <position position="165"/>
    </location>
    <ligand>
        <name>D-glyceraldehyde 3-phosphate</name>
        <dbReference type="ChEBI" id="CHEBI:59776"/>
    </ligand>
</feature>
<feature type="binding site" evidence="1">
    <location>
        <begin position="194"/>
        <end position="195"/>
    </location>
    <ligand>
        <name>D-glyceraldehyde 3-phosphate</name>
        <dbReference type="ChEBI" id="CHEBI:59776"/>
    </ligand>
</feature>
<feature type="binding site" evidence="1">
    <location>
        <position position="217"/>
    </location>
    <ligand>
        <name>D-glyceraldehyde 3-phosphate</name>
        <dbReference type="ChEBI" id="CHEBI:59776"/>
    </ligand>
</feature>
<feature type="site" description="Activates thiol group during catalysis" evidence="1">
    <location>
        <position position="162"/>
    </location>
</feature>
<feature type="non-terminal residue">
    <location>
        <position position="1"/>
    </location>
</feature>
<feature type="non-terminal residue">
    <location>
        <position position="294"/>
    </location>
</feature>
<organism>
    <name type="scientific">Citrobacter freundii</name>
    <dbReference type="NCBI Taxonomy" id="546"/>
    <lineage>
        <taxon>Bacteria</taxon>
        <taxon>Pseudomonadati</taxon>
        <taxon>Pseudomonadota</taxon>
        <taxon>Gammaproteobacteria</taxon>
        <taxon>Enterobacterales</taxon>
        <taxon>Enterobacteriaceae</taxon>
        <taxon>Citrobacter</taxon>
        <taxon>Citrobacter freundii complex</taxon>
    </lineage>
</organism>
<keyword id="KW-0963">Cytoplasm</keyword>
<keyword id="KW-0324">Glycolysis</keyword>
<keyword id="KW-0520">NAD</keyword>
<keyword id="KW-0547">Nucleotide-binding</keyword>
<keyword id="KW-0560">Oxidoreductase</keyword>
<accession>P24748</accession>